<sequence>MAAKKTTSKNTVNSANGFVFQILGPVVDVKFSEDNIPMIYDALVVDNNGVELVLEVEQHMGDEVVRTIAMGPTEGLAKGLPVINTNAPILAPVGDDVLGRMFNVTGHAIDEKPEFTGKRMPIHRDAPAYEELITNAEILETGIKVIDLMIPFAKGGKIGLFGGAGVGKTVLIQELINNIAKAHSGVSVFAGVGERTREGNDLYHEFIEAGVLDKTSLVFGQMNEPPGARMRVALTGLTIAEHFRDEKNMDVLLFIDNIFRFTQAGSEVSALLGRMPSAVGYQPTLSTEMGSLQERITSTNKGSITSVQAVYVPADDLTDPAPATTFTHLDAKIVLDRSIASLGIYPAVDPLSSSSRMLDPEIIGEEHYNVALGVQGTLQKYQDLQSIIAILGMDELSAEDKLIVQRARKIRNFLSQSFYVGEKFTGRPGQYVKVSDTVRSFKMILDGEMDDIPEILFLYKGTAEDVIQAYNETKVKNKK</sequence>
<feature type="chain" id="PRO_0000254296" description="ATP synthase subunit beta">
    <location>
        <begin position="1"/>
        <end position="479"/>
    </location>
</feature>
<feature type="binding site" evidence="1">
    <location>
        <begin position="162"/>
        <end position="169"/>
    </location>
    <ligand>
        <name>ATP</name>
        <dbReference type="ChEBI" id="CHEBI:30616"/>
    </ligand>
</feature>
<proteinExistence type="inferred from homology"/>
<evidence type="ECO:0000255" key="1">
    <source>
        <dbReference type="HAMAP-Rule" id="MF_01347"/>
    </source>
</evidence>
<dbReference type="EC" id="7.1.2.2" evidence="1"/>
<dbReference type="EMBL" id="AE017263">
    <property type="protein sequence ID" value="AAT75471.1"/>
    <property type="molecule type" value="Genomic_DNA"/>
</dbReference>
<dbReference type="RefSeq" id="WP_011183012.1">
    <property type="nucleotide sequence ID" value="NC_006055.1"/>
</dbReference>
<dbReference type="RefSeq" id="YP_053355.1">
    <property type="nucleotide sequence ID" value="NC_006055.1"/>
</dbReference>
<dbReference type="SMR" id="Q6F202"/>
<dbReference type="STRING" id="265311.Mfl115"/>
<dbReference type="PaxDb" id="265311-Mfl115"/>
<dbReference type="EnsemblBacteria" id="AAT75471">
    <property type="protein sequence ID" value="AAT75471"/>
    <property type="gene ID" value="Mfl115"/>
</dbReference>
<dbReference type="GeneID" id="2897908"/>
<dbReference type="KEGG" id="mfl:Mfl115"/>
<dbReference type="PATRIC" id="fig|265311.5.peg.116"/>
<dbReference type="eggNOG" id="COG0055">
    <property type="taxonomic scope" value="Bacteria"/>
</dbReference>
<dbReference type="HOGENOM" id="CLU_022398_0_2_14"/>
<dbReference type="OrthoDB" id="9801639at2"/>
<dbReference type="Proteomes" id="UP000006647">
    <property type="component" value="Chromosome"/>
</dbReference>
<dbReference type="GO" id="GO:0005886">
    <property type="term" value="C:plasma membrane"/>
    <property type="evidence" value="ECO:0007669"/>
    <property type="project" value="UniProtKB-SubCell"/>
</dbReference>
<dbReference type="GO" id="GO:0045259">
    <property type="term" value="C:proton-transporting ATP synthase complex"/>
    <property type="evidence" value="ECO:0007669"/>
    <property type="project" value="UniProtKB-KW"/>
</dbReference>
<dbReference type="GO" id="GO:0005524">
    <property type="term" value="F:ATP binding"/>
    <property type="evidence" value="ECO:0007669"/>
    <property type="project" value="UniProtKB-UniRule"/>
</dbReference>
<dbReference type="GO" id="GO:0016887">
    <property type="term" value="F:ATP hydrolysis activity"/>
    <property type="evidence" value="ECO:0007669"/>
    <property type="project" value="InterPro"/>
</dbReference>
<dbReference type="GO" id="GO:0046933">
    <property type="term" value="F:proton-transporting ATP synthase activity, rotational mechanism"/>
    <property type="evidence" value="ECO:0007669"/>
    <property type="project" value="UniProtKB-UniRule"/>
</dbReference>
<dbReference type="CDD" id="cd18110">
    <property type="entry name" value="ATP-synt_F1_beta_C"/>
    <property type="match status" value="1"/>
</dbReference>
<dbReference type="CDD" id="cd18115">
    <property type="entry name" value="ATP-synt_F1_beta_N"/>
    <property type="match status" value="1"/>
</dbReference>
<dbReference type="CDD" id="cd01133">
    <property type="entry name" value="F1-ATPase_beta_CD"/>
    <property type="match status" value="1"/>
</dbReference>
<dbReference type="FunFam" id="1.10.1140.10:FF:000005">
    <property type="entry name" value="ATP synthase subunit beta"/>
    <property type="match status" value="1"/>
</dbReference>
<dbReference type="FunFam" id="3.40.50.300:FF:000004">
    <property type="entry name" value="ATP synthase subunit beta"/>
    <property type="match status" value="1"/>
</dbReference>
<dbReference type="Gene3D" id="2.40.10.170">
    <property type="match status" value="1"/>
</dbReference>
<dbReference type="Gene3D" id="1.10.1140.10">
    <property type="entry name" value="Bovine Mitochondrial F1-atpase, Atp Synthase Beta Chain, Chain D, domain 3"/>
    <property type="match status" value="1"/>
</dbReference>
<dbReference type="Gene3D" id="3.40.50.300">
    <property type="entry name" value="P-loop containing nucleotide triphosphate hydrolases"/>
    <property type="match status" value="1"/>
</dbReference>
<dbReference type="HAMAP" id="MF_01347">
    <property type="entry name" value="ATP_synth_beta_bact"/>
    <property type="match status" value="1"/>
</dbReference>
<dbReference type="InterPro" id="IPR003593">
    <property type="entry name" value="AAA+_ATPase"/>
</dbReference>
<dbReference type="InterPro" id="IPR055190">
    <property type="entry name" value="ATP-synt_VA_C"/>
</dbReference>
<dbReference type="InterPro" id="IPR005722">
    <property type="entry name" value="ATP_synth_F1_bsu"/>
</dbReference>
<dbReference type="InterPro" id="IPR050053">
    <property type="entry name" value="ATPase_alpha/beta_chains"/>
</dbReference>
<dbReference type="InterPro" id="IPR004100">
    <property type="entry name" value="ATPase_F1/V1/A1_a/bsu_N"/>
</dbReference>
<dbReference type="InterPro" id="IPR036121">
    <property type="entry name" value="ATPase_F1/V1/A1_a/bsu_N_sf"/>
</dbReference>
<dbReference type="InterPro" id="IPR000194">
    <property type="entry name" value="ATPase_F1/V1/A1_a/bsu_nucl-bd"/>
</dbReference>
<dbReference type="InterPro" id="IPR024034">
    <property type="entry name" value="ATPase_F1/V1_b/a_C"/>
</dbReference>
<dbReference type="InterPro" id="IPR027417">
    <property type="entry name" value="P-loop_NTPase"/>
</dbReference>
<dbReference type="NCBIfam" id="TIGR01039">
    <property type="entry name" value="atpD"/>
    <property type="match status" value="1"/>
</dbReference>
<dbReference type="PANTHER" id="PTHR15184">
    <property type="entry name" value="ATP SYNTHASE"/>
    <property type="match status" value="1"/>
</dbReference>
<dbReference type="PANTHER" id="PTHR15184:SF71">
    <property type="entry name" value="ATP SYNTHASE SUBUNIT BETA, MITOCHONDRIAL"/>
    <property type="match status" value="1"/>
</dbReference>
<dbReference type="Pfam" id="PF00006">
    <property type="entry name" value="ATP-synt_ab"/>
    <property type="match status" value="1"/>
</dbReference>
<dbReference type="Pfam" id="PF02874">
    <property type="entry name" value="ATP-synt_ab_N"/>
    <property type="match status" value="1"/>
</dbReference>
<dbReference type="Pfam" id="PF22919">
    <property type="entry name" value="ATP-synt_VA_C"/>
    <property type="match status" value="1"/>
</dbReference>
<dbReference type="SMART" id="SM00382">
    <property type="entry name" value="AAA"/>
    <property type="match status" value="1"/>
</dbReference>
<dbReference type="SUPFAM" id="SSF47917">
    <property type="entry name" value="C-terminal domain of alpha and beta subunits of F1 ATP synthase"/>
    <property type="match status" value="1"/>
</dbReference>
<dbReference type="SUPFAM" id="SSF50615">
    <property type="entry name" value="N-terminal domain of alpha and beta subunits of F1 ATP synthase"/>
    <property type="match status" value="1"/>
</dbReference>
<dbReference type="SUPFAM" id="SSF52540">
    <property type="entry name" value="P-loop containing nucleoside triphosphate hydrolases"/>
    <property type="match status" value="1"/>
</dbReference>
<name>ATPB_MESFL</name>
<protein>
    <recommendedName>
        <fullName evidence="1">ATP synthase subunit beta</fullName>
        <ecNumber evidence="1">7.1.2.2</ecNumber>
    </recommendedName>
    <alternativeName>
        <fullName evidence="1">ATP synthase F1 sector subunit beta</fullName>
    </alternativeName>
    <alternativeName>
        <fullName evidence="1">F-ATPase subunit beta</fullName>
    </alternativeName>
</protein>
<comment type="function">
    <text evidence="1">Produces ATP from ADP in the presence of a proton gradient across the membrane. The catalytic sites are hosted primarily by the beta subunits.</text>
</comment>
<comment type="catalytic activity">
    <reaction evidence="1">
        <text>ATP + H2O + 4 H(+)(in) = ADP + phosphate + 5 H(+)(out)</text>
        <dbReference type="Rhea" id="RHEA:57720"/>
        <dbReference type="ChEBI" id="CHEBI:15377"/>
        <dbReference type="ChEBI" id="CHEBI:15378"/>
        <dbReference type="ChEBI" id="CHEBI:30616"/>
        <dbReference type="ChEBI" id="CHEBI:43474"/>
        <dbReference type="ChEBI" id="CHEBI:456216"/>
        <dbReference type="EC" id="7.1.2.2"/>
    </reaction>
</comment>
<comment type="subunit">
    <text evidence="1">F-type ATPases have 2 components, CF(1) - the catalytic core - and CF(0) - the membrane proton channel. CF(1) has five subunits: alpha(3), beta(3), gamma(1), delta(1), epsilon(1). CF(0) has three main subunits: a(1), b(2) and c(9-12). The alpha and beta chains form an alternating ring which encloses part of the gamma chain. CF(1) is attached to CF(0) by a central stalk formed by the gamma and epsilon chains, while a peripheral stalk is formed by the delta and b chains.</text>
</comment>
<comment type="subcellular location">
    <subcellularLocation>
        <location evidence="1">Cell membrane</location>
        <topology evidence="1">Peripheral membrane protein</topology>
    </subcellularLocation>
</comment>
<comment type="similarity">
    <text evidence="1">Belongs to the ATPase alpha/beta chains family.</text>
</comment>
<accession>Q6F202</accession>
<organism>
    <name type="scientific">Mesoplasma florum (strain ATCC 33453 / NBRC 100688 / NCTC 11704 / L1)</name>
    <name type="common">Acholeplasma florum</name>
    <dbReference type="NCBI Taxonomy" id="265311"/>
    <lineage>
        <taxon>Bacteria</taxon>
        <taxon>Bacillati</taxon>
        <taxon>Mycoplasmatota</taxon>
        <taxon>Mollicutes</taxon>
        <taxon>Entomoplasmatales</taxon>
        <taxon>Entomoplasmataceae</taxon>
        <taxon>Mesoplasma</taxon>
    </lineage>
</organism>
<keyword id="KW-0066">ATP synthesis</keyword>
<keyword id="KW-0067">ATP-binding</keyword>
<keyword id="KW-1003">Cell membrane</keyword>
<keyword id="KW-0139">CF(1)</keyword>
<keyword id="KW-0375">Hydrogen ion transport</keyword>
<keyword id="KW-0406">Ion transport</keyword>
<keyword id="KW-0472">Membrane</keyword>
<keyword id="KW-0547">Nucleotide-binding</keyword>
<keyword id="KW-1185">Reference proteome</keyword>
<keyword id="KW-1278">Translocase</keyword>
<keyword id="KW-0813">Transport</keyword>
<gene>
    <name evidence="1" type="primary">atpD</name>
    <name type="ordered locus">Mfl115</name>
</gene>
<reference key="1">
    <citation type="submission" date="2004-06" db="EMBL/GenBank/DDBJ databases">
        <authorList>
            <person name="Birren B.W."/>
            <person name="Stange-Thomann N."/>
            <person name="Hafez N."/>
            <person name="DeCaprio D."/>
            <person name="Fisher S."/>
            <person name="Butler J."/>
            <person name="Elkins T."/>
            <person name="Kodira C.D."/>
            <person name="Major J."/>
            <person name="Wang S."/>
            <person name="Nicol R."/>
            <person name="Nusbaum C."/>
        </authorList>
    </citation>
    <scope>NUCLEOTIDE SEQUENCE [LARGE SCALE GENOMIC DNA]</scope>
    <source>
        <strain>ATCC 33453 / NBRC 100688 / NCTC 11704 / L1</strain>
    </source>
</reference>